<gene>
    <name evidence="1" type="primary">ppa</name>
    <name type="ordered locus">GOX0757</name>
</gene>
<protein>
    <recommendedName>
        <fullName evidence="1">Inorganic pyrophosphatase</fullName>
        <ecNumber evidence="1">3.6.1.1</ecNumber>
    </recommendedName>
    <alternativeName>
        <fullName evidence="1">Pyrophosphate phospho-hydrolase</fullName>
        <shortName evidence="1">PPase</shortName>
    </alternativeName>
</protein>
<dbReference type="EC" id="3.6.1.1" evidence="1"/>
<dbReference type="EMBL" id="D86440">
    <property type="protein sequence ID" value="BAA19757.1"/>
    <property type="status" value="ALT_FRAME"/>
    <property type="molecule type" value="Genomic_DNA"/>
</dbReference>
<dbReference type="EMBL" id="CP000009">
    <property type="protein sequence ID" value="AAW60533.1"/>
    <property type="molecule type" value="Genomic_DNA"/>
</dbReference>
<dbReference type="RefSeq" id="WP_011252330.1">
    <property type="nucleotide sequence ID" value="NZ_LT900338.1"/>
</dbReference>
<dbReference type="SMR" id="O05545"/>
<dbReference type="STRING" id="290633.GOX0757"/>
<dbReference type="GeneID" id="56905075"/>
<dbReference type="KEGG" id="gox:GOX0757"/>
<dbReference type="eggNOG" id="COG0221">
    <property type="taxonomic scope" value="Bacteria"/>
</dbReference>
<dbReference type="HOGENOM" id="CLU_073198_1_0_5"/>
<dbReference type="Proteomes" id="UP000006375">
    <property type="component" value="Chromosome"/>
</dbReference>
<dbReference type="GO" id="GO:0005737">
    <property type="term" value="C:cytoplasm"/>
    <property type="evidence" value="ECO:0007669"/>
    <property type="project" value="UniProtKB-SubCell"/>
</dbReference>
<dbReference type="GO" id="GO:0004427">
    <property type="term" value="F:inorganic diphosphate phosphatase activity"/>
    <property type="evidence" value="ECO:0007669"/>
    <property type="project" value="UniProtKB-UniRule"/>
</dbReference>
<dbReference type="GO" id="GO:0000287">
    <property type="term" value="F:magnesium ion binding"/>
    <property type="evidence" value="ECO:0007669"/>
    <property type="project" value="UniProtKB-UniRule"/>
</dbReference>
<dbReference type="GO" id="GO:0006796">
    <property type="term" value="P:phosphate-containing compound metabolic process"/>
    <property type="evidence" value="ECO:0007669"/>
    <property type="project" value="InterPro"/>
</dbReference>
<dbReference type="CDD" id="cd00412">
    <property type="entry name" value="pyrophosphatase"/>
    <property type="match status" value="1"/>
</dbReference>
<dbReference type="FunFam" id="3.90.80.10:FF:000003">
    <property type="entry name" value="Inorganic pyrophosphatase"/>
    <property type="match status" value="1"/>
</dbReference>
<dbReference type="Gene3D" id="3.90.80.10">
    <property type="entry name" value="Inorganic pyrophosphatase"/>
    <property type="match status" value="1"/>
</dbReference>
<dbReference type="HAMAP" id="MF_00209">
    <property type="entry name" value="Inorganic_PPase"/>
    <property type="match status" value="1"/>
</dbReference>
<dbReference type="InterPro" id="IPR008162">
    <property type="entry name" value="Pyrophosphatase"/>
</dbReference>
<dbReference type="InterPro" id="IPR036649">
    <property type="entry name" value="Pyrophosphatase_sf"/>
</dbReference>
<dbReference type="NCBIfam" id="NF002317">
    <property type="entry name" value="PRK01250.1"/>
    <property type="match status" value="1"/>
</dbReference>
<dbReference type="PANTHER" id="PTHR10286">
    <property type="entry name" value="INORGANIC PYROPHOSPHATASE"/>
    <property type="match status" value="1"/>
</dbReference>
<dbReference type="Pfam" id="PF00719">
    <property type="entry name" value="Pyrophosphatase"/>
    <property type="match status" value="1"/>
</dbReference>
<dbReference type="SUPFAM" id="SSF50324">
    <property type="entry name" value="Inorganic pyrophosphatase"/>
    <property type="match status" value="1"/>
</dbReference>
<reference key="1">
    <citation type="journal article" date="1997" name="Appl. Environ. Microbiol.">
        <title>Characterization of the genes encoding the three-component membrane-bound alcohol dehydrogenase from Gluconobacter suboxydans and their expression in Acetobacter pasteurianus.</title>
        <authorList>
            <person name="Kondo K."/>
            <person name="Horinouchi S."/>
        </authorList>
    </citation>
    <scope>NUCLEOTIDE SEQUENCE [GENOMIC DNA]</scope>
    <source>
        <strain>ATCC 621 / DSM 50049 / NBRC 3172 / NCIMB 7069 / NRRL B-72</strain>
    </source>
</reference>
<reference key="2">
    <citation type="journal article" date="2005" name="Nat. Biotechnol.">
        <title>Complete genome sequence of the acetic acid bacterium Gluconobacter oxydans.</title>
        <authorList>
            <person name="Prust C."/>
            <person name="Hoffmeister M."/>
            <person name="Liesegang H."/>
            <person name="Wiezer A."/>
            <person name="Fricke W.F."/>
            <person name="Ehrenreich A."/>
            <person name="Gottschalk G."/>
            <person name="Deppenmeier U."/>
        </authorList>
    </citation>
    <scope>NUCLEOTIDE SEQUENCE [LARGE SCALE GENOMIC DNA]</scope>
    <source>
        <strain>621H</strain>
    </source>
</reference>
<evidence type="ECO:0000255" key="1">
    <source>
        <dbReference type="HAMAP-Rule" id="MF_00209"/>
    </source>
</evidence>
<evidence type="ECO:0000305" key="2"/>
<accession>O05545</accession>
<accession>Q5FSW3</accession>
<proteinExistence type="inferred from homology"/>
<organism>
    <name type="scientific">Gluconobacter oxydans (strain 621H)</name>
    <name type="common">Gluconobacter suboxydans</name>
    <dbReference type="NCBI Taxonomy" id="290633"/>
    <lineage>
        <taxon>Bacteria</taxon>
        <taxon>Pseudomonadati</taxon>
        <taxon>Pseudomonadota</taxon>
        <taxon>Alphaproteobacteria</taxon>
        <taxon>Acetobacterales</taxon>
        <taxon>Acetobacteraceae</taxon>
        <taxon>Gluconobacter</taxon>
    </lineage>
</organism>
<comment type="function">
    <text evidence="1">Catalyzes the hydrolysis of inorganic pyrophosphate (PPi) forming two phosphate ions.</text>
</comment>
<comment type="catalytic activity">
    <reaction evidence="1">
        <text>diphosphate + H2O = 2 phosphate + H(+)</text>
        <dbReference type="Rhea" id="RHEA:24576"/>
        <dbReference type="ChEBI" id="CHEBI:15377"/>
        <dbReference type="ChEBI" id="CHEBI:15378"/>
        <dbReference type="ChEBI" id="CHEBI:33019"/>
        <dbReference type="ChEBI" id="CHEBI:43474"/>
        <dbReference type="EC" id="3.6.1.1"/>
    </reaction>
</comment>
<comment type="cofactor">
    <cofactor evidence="1">
        <name>Mg(2+)</name>
        <dbReference type="ChEBI" id="CHEBI:18420"/>
    </cofactor>
</comment>
<comment type="subunit">
    <text evidence="1">Homohexamer.</text>
</comment>
<comment type="subcellular location">
    <subcellularLocation>
        <location evidence="1">Cytoplasm</location>
    </subcellularLocation>
</comment>
<comment type="similarity">
    <text evidence="1">Belongs to the PPase family.</text>
</comment>
<comment type="sequence caution" evidence="2">
    <conflict type="frameshift">
        <sequence resource="EMBL-CDS" id="BAA19757"/>
    </conflict>
</comment>
<feature type="chain" id="PRO_0000137498" description="Inorganic pyrophosphatase">
    <location>
        <begin position="1"/>
        <end position="173"/>
    </location>
</feature>
<feature type="binding site" evidence="1">
    <location>
        <position position="29"/>
    </location>
    <ligand>
        <name>substrate</name>
    </ligand>
</feature>
<feature type="binding site" evidence="1">
    <location>
        <position position="43"/>
    </location>
    <ligand>
        <name>substrate</name>
    </ligand>
</feature>
<feature type="binding site" evidence="1">
    <location>
        <position position="55"/>
    </location>
    <ligand>
        <name>substrate</name>
    </ligand>
</feature>
<feature type="binding site" evidence="1">
    <location>
        <position position="65"/>
    </location>
    <ligand>
        <name>Mg(2+)</name>
        <dbReference type="ChEBI" id="CHEBI:18420"/>
        <label>1</label>
    </ligand>
</feature>
<feature type="binding site" evidence="1">
    <location>
        <position position="70"/>
    </location>
    <ligand>
        <name>Mg(2+)</name>
        <dbReference type="ChEBI" id="CHEBI:18420"/>
        <label>1</label>
    </ligand>
</feature>
<feature type="binding site" evidence="1">
    <location>
        <position position="70"/>
    </location>
    <ligand>
        <name>Mg(2+)</name>
        <dbReference type="ChEBI" id="CHEBI:18420"/>
        <label>2</label>
    </ligand>
</feature>
<feature type="binding site" evidence="1">
    <location>
        <position position="102"/>
    </location>
    <ligand>
        <name>Mg(2+)</name>
        <dbReference type="ChEBI" id="CHEBI:18420"/>
        <label>1</label>
    </ligand>
</feature>
<feature type="binding site" evidence="1">
    <location>
        <position position="141"/>
    </location>
    <ligand>
        <name>substrate</name>
    </ligand>
</feature>
<keyword id="KW-0963">Cytoplasm</keyword>
<keyword id="KW-0378">Hydrolase</keyword>
<keyword id="KW-0460">Magnesium</keyword>
<keyword id="KW-0479">Metal-binding</keyword>
<keyword id="KW-1185">Reference proteome</keyword>
<name>IPYR_GLUOX</name>
<sequence>MDVSKISPGKDLPNDINVVIEIPQGSQVKYEVDKDSGALVVDRFLFTPMAYPAAYGFIPGTLAADGDPADALVLTPAAVVPGSVIRARPIGMLKMEDESGQDEKIICVPHDKVHPQFSNVHSVDDLPEITKKAITHFFERYKDLEPNKWVKVTGWADKAEAGKVIMEALAAAK</sequence>